<reference key="1">
    <citation type="journal article" date="2010" name="J. Bacteriol.">
        <title>Genome sequence of the deep-rooted Yersinia pestis strain Angola reveals new insights into the evolution and pangenome of the plague bacterium.</title>
        <authorList>
            <person name="Eppinger M."/>
            <person name="Worsham P.L."/>
            <person name="Nikolich M.P."/>
            <person name="Riley D.R."/>
            <person name="Sebastian Y."/>
            <person name="Mou S."/>
            <person name="Achtman M."/>
            <person name="Lindler L.E."/>
            <person name="Ravel J."/>
        </authorList>
    </citation>
    <scope>NUCLEOTIDE SEQUENCE [LARGE SCALE GENOMIC DNA]</scope>
    <source>
        <strain>Angola</strain>
    </source>
</reference>
<feature type="chain" id="PRO_1000191109" description="Multidrug resistance protein MdtK">
    <location>
        <begin position="1"/>
        <end position="457"/>
    </location>
</feature>
<feature type="transmembrane region" description="Helical" evidence="1">
    <location>
        <begin position="11"/>
        <end position="31"/>
    </location>
</feature>
<feature type="transmembrane region" description="Helical" evidence="1">
    <location>
        <begin position="46"/>
        <end position="66"/>
    </location>
</feature>
<feature type="transmembrane region" description="Helical" evidence="1">
    <location>
        <begin position="93"/>
        <end position="113"/>
    </location>
</feature>
<feature type="transmembrane region" description="Helical" evidence="1">
    <location>
        <begin position="127"/>
        <end position="147"/>
    </location>
</feature>
<feature type="transmembrane region" description="Helical" evidence="1">
    <location>
        <begin position="160"/>
        <end position="180"/>
    </location>
</feature>
<feature type="transmembrane region" description="Helical" evidence="1">
    <location>
        <begin position="188"/>
        <end position="208"/>
    </location>
</feature>
<feature type="transmembrane region" description="Helical" evidence="1">
    <location>
        <begin position="243"/>
        <end position="263"/>
    </location>
</feature>
<feature type="transmembrane region" description="Helical" evidence="1">
    <location>
        <begin position="283"/>
        <end position="301"/>
    </location>
</feature>
<feature type="transmembrane region" description="Helical" evidence="1">
    <location>
        <begin position="316"/>
        <end position="336"/>
    </location>
</feature>
<feature type="transmembrane region" description="Helical" evidence="1">
    <location>
        <begin position="357"/>
        <end position="377"/>
    </location>
</feature>
<feature type="transmembrane region" description="Helical" evidence="1">
    <location>
        <begin position="387"/>
        <end position="407"/>
    </location>
</feature>
<feature type="transmembrane region" description="Helical" evidence="1">
    <location>
        <begin position="418"/>
        <end position="438"/>
    </location>
</feature>
<protein>
    <recommendedName>
        <fullName evidence="1">Multidrug resistance protein MdtK</fullName>
    </recommendedName>
    <alternativeName>
        <fullName evidence="1">Multidrug-efflux transporter</fullName>
    </alternativeName>
</protein>
<sequence length="457" mass="49401">MQKYIVEARSLLALAIPVVIAQLSQTAMGVVDTIMAGSVSATDMAAVAVGTSIWLPAILFGHGLLLALTPTVAQLNGSGRRSQIAHQVRQGFWLALCVSVLIMLVLYNSDHVIKQMDNIDPVLAQKAVGFLHAIMWGVPGYLFFQVLRNQCEGLSKTKPGMVIGFVGLLVNIPINYIFIYGKFGAPALGGVGCGVATASVYWVMFLMMRWYVTRARSQQDIKLEKGFAAPDWQVMKRLSGLGLPVALALFFEVTLFAVVALLVSPLGIVAVAGHQIALNFSSLMFMLPMSLSVAATIRVGFRLGQGAVEQAQVAAYTSMAVGLLLASVTAVFTIVFREHIALLYNKTPEVVTMASHLMLLAALYQLSDAVQVIGSGVLRGYKDTRSIFFITFTAYWLLGLPSGYLLGLTDYILPAMGPAGFWIGFIIGLTAAAILMVLRIRWLQKQPTAFILQRAAH</sequence>
<dbReference type="EMBL" id="CP000901">
    <property type="protein sequence ID" value="ABX86849.1"/>
    <property type="molecule type" value="Genomic_DNA"/>
</dbReference>
<dbReference type="RefSeq" id="WP_002210937.1">
    <property type="nucleotide sequence ID" value="NZ_CP009935.1"/>
</dbReference>
<dbReference type="SMR" id="A9QZC0"/>
<dbReference type="KEGG" id="ypg:YpAngola_A2579"/>
<dbReference type="PATRIC" id="fig|349746.12.peg.3605"/>
<dbReference type="GO" id="GO:0005886">
    <property type="term" value="C:plasma membrane"/>
    <property type="evidence" value="ECO:0007669"/>
    <property type="project" value="UniProtKB-SubCell"/>
</dbReference>
<dbReference type="GO" id="GO:0015297">
    <property type="term" value="F:antiporter activity"/>
    <property type="evidence" value="ECO:0007669"/>
    <property type="project" value="UniProtKB-UniRule"/>
</dbReference>
<dbReference type="GO" id="GO:0042910">
    <property type="term" value="F:xenobiotic transmembrane transporter activity"/>
    <property type="evidence" value="ECO:0007669"/>
    <property type="project" value="UniProtKB-UniRule"/>
</dbReference>
<dbReference type="GO" id="GO:0006814">
    <property type="term" value="P:sodium ion transport"/>
    <property type="evidence" value="ECO:0007669"/>
    <property type="project" value="UniProtKB-UniRule"/>
</dbReference>
<dbReference type="GO" id="GO:0006855">
    <property type="term" value="P:xenobiotic transmembrane transport"/>
    <property type="evidence" value="ECO:0007669"/>
    <property type="project" value="UniProtKB-UniRule"/>
</dbReference>
<dbReference type="CDD" id="cd13131">
    <property type="entry name" value="MATE_NorM_like"/>
    <property type="match status" value="1"/>
</dbReference>
<dbReference type="HAMAP" id="MF_00400">
    <property type="entry name" value="MdtK"/>
    <property type="match status" value="1"/>
</dbReference>
<dbReference type="InterPro" id="IPR002528">
    <property type="entry name" value="MATE_fam"/>
</dbReference>
<dbReference type="InterPro" id="IPR050222">
    <property type="entry name" value="MATE_MdtK"/>
</dbReference>
<dbReference type="InterPro" id="IPR048279">
    <property type="entry name" value="MdtK-like"/>
</dbReference>
<dbReference type="InterPro" id="IPR022913">
    <property type="entry name" value="Multidrug-R_MdtK"/>
</dbReference>
<dbReference type="NCBIfam" id="TIGR00797">
    <property type="entry name" value="matE"/>
    <property type="match status" value="1"/>
</dbReference>
<dbReference type="PANTHER" id="PTHR43298:SF2">
    <property type="entry name" value="FMN_FAD EXPORTER YEEO-RELATED"/>
    <property type="match status" value="1"/>
</dbReference>
<dbReference type="PANTHER" id="PTHR43298">
    <property type="entry name" value="MULTIDRUG RESISTANCE PROTEIN NORM-RELATED"/>
    <property type="match status" value="1"/>
</dbReference>
<dbReference type="Pfam" id="PF01554">
    <property type="entry name" value="MatE"/>
    <property type="match status" value="2"/>
</dbReference>
<dbReference type="PIRSF" id="PIRSF006603">
    <property type="entry name" value="DinF"/>
    <property type="match status" value="1"/>
</dbReference>
<keyword id="KW-0050">Antiport</keyword>
<keyword id="KW-0997">Cell inner membrane</keyword>
<keyword id="KW-1003">Cell membrane</keyword>
<keyword id="KW-0406">Ion transport</keyword>
<keyword id="KW-0472">Membrane</keyword>
<keyword id="KW-0915">Sodium</keyword>
<keyword id="KW-0739">Sodium transport</keyword>
<keyword id="KW-0812">Transmembrane</keyword>
<keyword id="KW-1133">Transmembrane helix</keyword>
<keyword id="KW-0813">Transport</keyword>
<accession>A9QZC0</accession>
<evidence type="ECO:0000255" key="1">
    <source>
        <dbReference type="HAMAP-Rule" id="MF_00400"/>
    </source>
</evidence>
<proteinExistence type="inferred from homology"/>
<gene>
    <name evidence="1" type="primary">mdtK</name>
    <name type="ordered locus">YpAngola_A2579</name>
</gene>
<name>MDTK_YERPG</name>
<organism>
    <name type="scientific">Yersinia pestis bv. Antiqua (strain Angola)</name>
    <dbReference type="NCBI Taxonomy" id="349746"/>
    <lineage>
        <taxon>Bacteria</taxon>
        <taxon>Pseudomonadati</taxon>
        <taxon>Pseudomonadota</taxon>
        <taxon>Gammaproteobacteria</taxon>
        <taxon>Enterobacterales</taxon>
        <taxon>Yersiniaceae</taxon>
        <taxon>Yersinia</taxon>
    </lineage>
</organism>
<comment type="function">
    <text evidence="1">Multidrug efflux pump that functions probably as a Na(+)/drug antiporter.</text>
</comment>
<comment type="subcellular location">
    <subcellularLocation>
        <location evidence="1">Cell inner membrane</location>
        <topology evidence="1">Multi-pass membrane protein</topology>
    </subcellularLocation>
</comment>
<comment type="similarity">
    <text evidence="1">Belongs to the multi antimicrobial extrusion (MATE) (TC 2.A.66.1) family. MdtK subfamily.</text>
</comment>